<organism>
    <name type="scientific">Bacillus cytotoxicus (strain DSM 22905 / CIP 110041 / 391-98 / NVH 391-98)</name>
    <dbReference type="NCBI Taxonomy" id="315749"/>
    <lineage>
        <taxon>Bacteria</taxon>
        <taxon>Bacillati</taxon>
        <taxon>Bacillota</taxon>
        <taxon>Bacilli</taxon>
        <taxon>Bacillales</taxon>
        <taxon>Bacillaceae</taxon>
        <taxon>Bacillus</taxon>
        <taxon>Bacillus cereus group</taxon>
    </lineage>
</organism>
<sequence>MEKQYLTVTALTRYIKTKIEYDPHLQSVWLKGEISNFKYHSRGHMYFTLKDENARIAAVMFAGHNRNIKFRPEDGMKVLVKGKISVYEASGSYQIYVHDMQPDGVGNLHLAYEQLKVRLEEEGLFSRVYKQPIPAYAKTIGVITSPTGAAIRDIITTIKRRYPIGNVIVFPVLVQGEFAAPSIVQAIQTANEMNDIDVLIVGRGGGSIEELWAFNEEIVARAIFASKIPIISAVGHETDFTIADFVADLRAPTPTAAAELAVPNILEMQEKVLQRTLRLQRAMREIVHKRQERLQTLQKSYAFRYPRQIYEQKEEQLDRALEQLVLAKERYMEKKVNQLKQLSFYLEKHHPAQRISQTKIAIETLQKQLRREMQTVLQTKEFAFVRIAKQLEALSPLKVMMRGYGLVYSEKNQVLKSVKDVSAGDVVSVQLQDGILDCNVSSVKERESNGK</sequence>
<gene>
    <name evidence="1" type="primary">xseA</name>
    <name type="ordered locus">Bcer98_2873</name>
</gene>
<name>EX7L_BACCN</name>
<keyword id="KW-0963">Cytoplasm</keyword>
<keyword id="KW-0269">Exonuclease</keyword>
<keyword id="KW-0378">Hydrolase</keyword>
<keyword id="KW-0540">Nuclease</keyword>
<dbReference type="EC" id="3.1.11.6" evidence="1"/>
<dbReference type="EMBL" id="CP000764">
    <property type="protein sequence ID" value="ABS23106.1"/>
    <property type="molecule type" value="Genomic_DNA"/>
</dbReference>
<dbReference type="RefSeq" id="WP_012095333.1">
    <property type="nucleotide sequence ID" value="NC_009674.1"/>
</dbReference>
<dbReference type="SMR" id="A7GSJ8"/>
<dbReference type="STRING" id="315749.Bcer98_2873"/>
<dbReference type="GeneID" id="33898126"/>
<dbReference type="KEGG" id="bcy:Bcer98_2873"/>
<dbReference type="eggNOG" id="COG1570">
    <property type="taxonomic scope" value="Bacteria"/>
</dbReference>
<dbReference type="HOGENOM" id="CLU_023625_3_1_9"/>
<dbReference type="OrthoDB" id="9802795at2"/>
<dbReference type="Proteomes" id="UP000002300">
    <property type="component" value="Chromosome"/>
</dbReference>
<dbReference type="GO" id="GO:0005737">
    <property type="term" value="C:cytoplasm"/>
    <property type="evidence" value="ECO:0007669"/>
    <property type="project" value="UniProtKB-SubCell"/>
</dbReference>
<dbReference type="GO" id="GO:0009318">
    <property type="term" value="C:exodeoxyribonuclease VII complex"/>
    <property type="evidence" value="ECO:0007669"/>
    <property type="project" value="InterPro"/>
</dbReference>
<dbReference type="GO" id="GO:0008855">
    <property type="term" value="F:exodeoxyribonuclease VII activity"/>
    <property type="evidence" value="ECO:0007669"/>
    <property type="project" value="UniProtKB-UniRule"/>
</dbReference>
<dbReference type="GO" id="GO:0003676">
    <property type="term" value="F:nucleic acid binding"/>
    <property type="evidence" value="ECO:0007669"/>
    <property type="project" value="InterPro"/>
</dbReference>
<dbReference type="GO" id="GO:0006308">
    <property type="term" value="P:DNA catabolic process"/>
    <property type="evidence" value="ECO:0007669"/>
    <property type="project" value="UniProtKB-UniRule"/>
</dbReference>
<dbReference type="CDD" id="cd04489">
    <property type="entry name" value="ExoVII_LU_OBF"/>
    <property type="match status" value="1"/>
</dbReference>
<dbReference type="HAMAP" id="MF_00378">
    <property type="entry name" value="Exonuc_7_L"/>
    <property type="match status" value="1"/>
</dbReference>
<dbReference type="InterPro" id="IPR003753">
    <property type="entry name" value="Exonuc_VII_L"/>
</dbReference>
<dbReference type="InterPro" id="IPR020579">
    <property type="entry name" value="Exonuc_VII_lsu_C"/>
</dbReference>
<dbReference type="InterPro" id="IPR025824">
    <property type="entry name" value="OB-fold_nuc-bd_dom"/>
</dbReference>
<dbReference type="NCBIfam" id="TIGR00237">
    <property type="entry name" value="xseA"/>
    <property type="match status" value="1"/>
</dbReference>
<dbReference type="PANTHER" id="PTHR30008">
    <property type="entry name" value="EXODEOXYRIBONUCLEASE 7 LARGE SUBUNIT"/>
    <property type="match status" value="1"/>
</dbReference>
<dbReference type="PANTHER" id="PTHR30008:SF0">
    <property type="entry name" value="EXODEOXYRIBONUCLEASE 7 LARGE SUBUNIT"/>
    <property type="match status" value="1"/>
</dbReference>
<dbReference type="Pfam" id="PF02601">
    <property type="entry name" value="Exonuc_VII_L"/>
    <property type="match status" value="1"/>
</dbReference>
<dbReference type="Pfam" id="PF13742">
    <property type="entry name" value="tRNA_anti_2"/>
    <property type="match status" value="1"/>
</dbReference>
<comment type="function">
    <text evidence="1">Bidirectionally degrades single-stranded DNA into large acid-insoluble oligonucleotides, which are then degraded further into small acid-soluble oligonucleotides.</text>
</comment>
<comment type="catalytic activity">
    <reaction evidence="1">
        <text>Exonucleolytic cleavage in either 5'- to 3'- or 3'- to 5'-direction to yield nucleoside 5'-phosphates.</text>
        <dbReference type="EC" id="3.1.11.6"/>
    </reaction>
</comment>
<comment type="subunit">
    <text evidence="1">Heterooligomer composed of large and small subunits.</text>
</comment>
<comment type="subcellular location">
    <subcellularLocation>
        <location evidence="1">Cytoplasm</location>
    </subcellularLocation>
</comment>
<comment type="similarity">
    <text evidence="1">Belongs to the XseA family.</text>
</comment>
<feature type="chain" id="PRO_1000079972" description="Exodeoxyribonuclease 7 large subunit">
    <location>
        <begin position="1"/>
        <end position="451"/>
    </location>
</feature>
<proteinExistence type="inferred from homology"/>
<protein>
    <recommendedName>
        <fullName evidence="1">Exodeoxyribonuclease 7 large subunit</fullName>
        <ecNumber evidence="1">3.1.11.6</ecNumber>
    </recommendedName>
    <alternativeName>
        <fullName evidence="1">Exodeoxyribonuclease VII large subunit</fullName>
        <shortName evidence="1">Exonuclease VII large subunit</shortName>
    </alternativeName>
</protein>
<reference key="1">
    <citation type="journal article" date="2008" name="Chem. Biol. Interact.">
        <title>Extending the Bacillus cereus group genomics to putative food-borne pathogens of different toxicity.</title>
        <authorList>
            <person name="Lapidus A."/>
            <person name="Goltsman E."/>
            <person name="Auger S."/>
            <person name="Galleron N."/>
            <person name="Segurens B."/>
            <person name="Dossat C."/>
            <person name="Land M.L."/>
            <person name="Broussolle V."/>
            <person name="Brillard J."/>
            <person name="Guinebretiere M.-H."/>
            <person name="Sanchis V."/>
            <person name="Nguen-the C."/>
            <person name="Lereclus D."/>
            <person name="Richardson P."/>
            <person name="Wincker P."/>
            <person name="Weissenbach J."/>
            <person name="Ehrlich S.D."/>
            <person name="Sorokin A."/>
        </authorList>
    </citation>
    <scope>NUCLEOTIDE SEQUENCE [LARGE SCALE GENOMIC DNA]</scope>
    <source>
        <strain>DSM 22905 / CIP 110041 / 391-98 / NVH 391-98</strain>
    </source>
</reference>
<evidence type="ECO:0000255" key="1">
    <source>
        <dbReference type="HAMAP-Rule" id="MF_00378"/>
    </source>
</evidence>
<accession>A7GSJ8</accession>